<feature type="initiator methionine" description="Removed" evidence="2">
    <location>
        <position position="1"/>
    </location>
</feature>
<feature type="chain" id="PRO_0000188527" description="Glycogen phosphorylase, liver form">
    <location>
        <begin position="2"/>
        <end position="851"/>
    </location>
</feature>
<feature type="binding site" evidence="2">
    <location>
        <begin position="43"/>
        <end position="45"/>
    </location>
    <ligand>
        <name>AMP</name>
        <dbReference type="ChEBI" id="CHEBI:456215"/>
    </ligand>
</feature>
<feature type="binding site" evidence="2">
    <location>
        <position position="76"/>
    </location>
    <ligand>
        <name>AMP</name>
        <dbReference type="ChEBI" id="CHEBI:456215"/>
    </ligand>
</feature>
<feature type="binding site" evidence="2">
    <location>
        <position position="310"/>
    </location>
    <ligand>
        <name>AMP</name>
        <dbReference type="ChEBI" id="CHEBI:456215"/>
    </ligand>
</feature>
<feature type="site" description="Involved in the association of subunits" evidence="1">
    <location>
        <position position="109"/>
    </location>
</feature>
<feature type="site" description="Involved in the association of subunits" evidence="1">
    <location>
        <position position="143"/>
    </location>
</feature>
<feature type="site" description="May be involved in allosteric control" evidence="1">
    <location>
        <position position="156"/>
    </location>
</feature>
<feature type="modified residue" description="N-acetylalanine" evidence="2">
    <location>
        <position position="2"/>
    </location>
</feature>
<feature type="modified residue" description="Phosphoserine; by PHK; in form phosphorylase a" evidence="2">
    <location>
        <position position="15"/>
    </location>
</feature>
<feature type="modified residue" description="N6-succinyllysine" evidence="4">
    <location>
        <position position="364"/>
    </location>
</feature>
<feature type="modified residue" description="N6-acetyllysine" evidence="2">
    <location>
        <position position="470"/>
    </location>
</feature>
<feature type="modified residue" description="Phosphoserine" evidence="4">
    <location>
        <position position="524"/>
    </location>
</feature>
<feature type="modified residue" description="Phosphoserine" evidence="3">
    <location>
        <position position="561"/>
    </location>
</feature>
<feature type="modified residue" description="Phosphoserine" evidence="2">
    <location>
        <position position="639"/>
    </location>
</feature>
<feature type="modified residue" description="N6-(pyridoxal phosphate)lysine" evidence="2">
    <location>
        <position position="681"/>
    </location>
</feature>
<feature type="modified residue" description="N6-acetyllysine" evidence="2">
    <location>
        <position position="796"/>
    </location>
</feature>
<gene>
    <name evidence="2" type="primary">PYGL</name>
</gene>
<comment type="function">
    <text evidence="2">Allosteric enzyme that catalyzes the rate-limiting step in glycogen catabolism, the phosphorolytic cleavage of glycogen to produce glucose-1-phosphate, and plays a central role in maintaining cellular and organismal glucose homeostasis.</text>
</comment>
<comment type="catalytic activity">
    <reaction evidence="2">
        <text>[(1-&gt;4)-alpha-D-glucosyl](n) + phosphate = [(1-&gt;4)-alpha-D-glucosyl](n-1) + alpha-D-glucose 1-phosphate</text>
        <dbReference type="Rhea" id="RHEA:41732"/>
        <dbReference type="Rhea" id="RHEA-COMP:9584"/>
        <dbReference type="Rhea" id="RHEA-COMP:9586"/>
        <dbReference type="ChEBI" id="CHEBI:15444"/>
        <dbReference type="ChEBI" id="CHEBI:43474"/>
        <dbReference type="ChEBI" id="CHEBI:58601"/>
        <dbReference type="EC" id="2.4.1.1"/>
    </reaction>
    <physiologicalReaction direction="left-to-right" evidence="2">
        <dbReference type="Rhea" id="RHEA:41733"/>
    </physiologicalReaction>
</comment>
<comment type="cofactor">
    <cofactor evidence="2">
        <name>pyridoxal 5'-phosphate</name>
        <dbReference type="ChEBI" id="CHEBI:597326"/>
    </cofactor>
</comment>
<comment type="activity regulation">
    <text evidence="2">Allosterically regulated through the non-covalent binding of metabolites, being activated by AMP and inhibited by ATP, ADP, and glucose-6-phosphate. The activity is also controlled by post-translational modifications including phosphorylation and acetylation.</text>
</comment>
<comment type="subunit">
    <text evidence="2">Homodimer; enzymatically active. Interacts with PPP1R3B; recruits the phosphatase PP1 which dephosphorylates and inactivates PYGL/glycogen phosphorylase.</text>
</comment>
<comment type="subcellular location">
    <subcellularLocation>
        <location evidence="2">Cytoplasm</location>
        <location evidence="2">Cytosol</location>
    </subcellularLocation>
</comment>
<comment type="PTM">
    <text evidence="2">Acetylation, which is up-regulated by glucose and insulin and down-regulated by glucagon, inhibits the glycogen phosphorylase activity by promoting PPP1R3B-mediated recruitment of phosphatase PP1 and Ser-15 dephosphorylation.</text>
</comment>
<comment type="PTM">
    <text evidence="2">Phosphorylation at Ser-15 converts inactive phosphorylase b into active phosphorylase a. Dephosphorylation of Ser-15 by phosphatase PP1 inactivates the enzyme.</text>
</comment>
<comment type="similarity">
    <text evidence="5">Belongs to the glycogen phosphorylase family.</text>
</comment>
<protein>
    <recommendedName>
        <fullName evidence="2">Glycogen phosphorylase, liver form</fullName>
        <ecNumber evidence="2">2.4.1.1</ecNumber>
    </recommendedName>
</protein>
<proteinExistence type="evidence at transcript level"/>
<dbReference type="EC" id="2.4.1.1" evidence="2"/>
<dbReference type="EMBL" id="AY827551">
    <property type="protein sequence ID" value="AAV87309.1"/>
    <property type="molecule type" value="mRNA"/>
</dbReference>
<dbReference type="RefSeq" id="NP_001020032.1">
    <property type="nucleotide sequence ID" value="NM_001024861.1"/>
</dbReference>
<dbReference type="SMR" id="Q5MIB5"/>
<dbReference type="STRING" id="9940.ENSOARP00000022235"/>
<dbReference type="CAZy" id="GT35">
    <property type="family name" value="Glycosyltransferase Family 35"/>
</dbReference>
<dbReference type="PaxDb" id="9940-ENSOARP00000022235"/>
<dbReference type="GeneID" id="554320"/>
<dbReference type="KEGG" id="oas:554320"/>
<dbReference type="CTD" id="5836"/>
<dbReference type="eggNOG" id="KOG2099">
    <property type="taxonomic scope" value="Eukaryota"/>
</dbReference>
<dbReference type="OrthoDB" id="9215500at2759"/>
<dbReference type="Proteomes" id="UP000002356">
    <property type="component" value="Unplaced"/>
</dbReference>
<dbReference type="GO" id="GO:0005829">
    <property type="term" value="C:cytosol"/>
    <property type="evidence" value="ECO:0007669"/>
    <property type="project" value="UniProtKB-SubCell"/>
</dbReference>
<dbReference type="GO" id="GO:0008184">
    <property type="term" value="F:glycogen phosphorylase activity"/>
    <property type="evidence" value="ECO:0007669"/>
    <property type="project" value="InterPro"/>
</dbReference>
<dbReference type="GO" id="GO:0000166">
    <property type="term" value="F:nucleotide binding"/>
    <property type="evidence" value="ECO:0007669"/>
    <property type="project" value="UniProtKB-KW"/>
</dbReference>
<dbReference type="GO" id="GO:0030170">
    <property type="term" value="F:pyridoxal phosphate binding"/>
    <property type="evidence" value="ECO:0007669"/>
    <property type="project" value="InterPro"/>
</dbReference>
<dbReference type="GO" id="GO:0005980">
    <property type="term" value="P:glycogen catabolic process"/>
    <property type="evidence" value="ECO:0007669"/>
    <property type="project" value="TreeGrafter"/>
</dbReference>
<dbReference type="CDD" id="cd04300">
    <property type="entry name" value="GT35_Glycogen_Phosphorylase"/>
    <property type="match status" value="1"/>
</dbReference>
<dbReference type="FunFam" id="3.40.50.2000:FF:000005">
    <property type="entry name" value="Alpha-1,4 glucan phosphorylase"/>
    <property type="match status" value="1"/>
</dbReference>
<dbReference type="FunFam" id="3.40.50.2000:FF:000153">
    <property type="entry name" value="Alpha-1,4 glucan phosphorylase"/>
    <property type="match status" value="1"/>
</dbReference>
<dbReference type="Gene3D" id="3.40.50.2000">
    <property type="entry name" value="Glycogen Phosphorylase B"/>
    <property type="match status" value="2"/>
</dbReference>
<dbReference type="InterPro" id="IPR011833">
    <property type="entry name" value="Glycg_phsphrylas"/>
</dbReference>
<dbReference type="InterPro" id="IPR000811">
    <property type="entry name" value="Glyco_trans_35"/>
</dbReference>
<dbReference type="NCBIfam" id="TIGR02093">
    <property type="entry name" value="P_ylase"/>
    <property type="match status" value="1"/>
</dbReference>
<dbReference type="PANTHER" id="PTHR11468">
    <property type="entry name" value="GLYCOGEN PHOSPHORYLASE"/>
    <property type="match status" value="1"/>
</dbReference>
<dbReference type="PANTHER" id="PTHR11468:SF3">
    <property type="entry name" value="GLYCOGEN PHOSPHORYLASE, LIVER FORM"/>
    <property type="match status" value="1"/>
</dbReference>
<dbReference type="Pfam" id="PF00343">
    <property type="entry name" value="Phosphorylase"/>
    <property type="match status" value="1"/>
</dbReference>
<dbReference type="PIRSF" id="PIRSF000460">
    <property type="entry name" value="Pprylas_GlgP"/>
    <property type="match status" value="1"/>
</dbReference>
<dbReference type="SUPFAM" id="SSF53756">
    <property type="entry name" value="UDP-Glycosyltransferase/glycogen phosphorylase"/>
    <property type="match status" value="1"/>
</dbReference>
<sequence>MAKPLTDQEKRRQISIRGIVGVENVAELKKGFNRHLHFTLVKDRNVATPRDYFFALAHTVRDHLVGRWIRTQQYYYEKCPKRVYYLSLEFYMGRTLQNTMINLGLQNACDEAIYQLGLDMEELEEIEEDAGLGNGGLGRLAACFLDSMATLGLAAYGYGIRYEYGIFNQKIRDGWQIEEADDWLRHGNPWEKARPEFMLPVHFYGRVEHTEAGTKWIDTQVVLALPYDTPVPGYLNNTVNTMRLWSARAPNDFNLRDFNVGDYIQAVLDRNLAENISRVLYPNDNFFEGKELRLKQEYFVVAATLQDVIRRFKASKFDSSNSAETAFDAFPDQVAIQLNDTHPALAIPELMRIFVDIEKLPWSKAWEITQKTFAYTNHTVLPEALERWPVELVENLLPRHLQIIYEINQKHLDKIAALFPKDVDRLRRMSLIEEEGVKRINMAHLCIVGSHAVNGVAKIHSDIVKTQVFKDFSELEPDKFQNKTNGITPRRWLLLCNPGLAELIAEKIGEDYVKDLSQLTKLNSFLGDDIFLREISNVKQENKLKFSQFLEKEYKVKINPSSMFDVQVKRIHEYKRQLLNCLHVVTMYNRIKKDPKKLFVPRTVIIGGKAAPGYYMAKLIIKLITSVAEVVNNDPMVGSKLKLIFLENYRVSLAEKVIPATDLSEQISTAGTEASGTGNMKFMQNGALTIGTMDGANVEMAEEAGEENLFIFGMRVEDVAALDKKGYEAKEYYEALPELKLAIDQIDKGFFSPKQPDLFKDLVNMLFYHDRFKVFADYEAYVKCQEKVSQLYMNPKAWNIMVLKNIAASGKFSSDRTIKEYARDIWNMEPSDIKISLSGEPSGGANKANGK</sequence>
<evidence type="ECO:0000250" key="1">
    <source>
        <dbReference type="UniProtKB" id="P00489"/>
    </source>
</evidence>
<evidence type="ECO:0000250" key="2">
    <source>
        <dbReference type="UniProtKB" id="P06737"/>
    </source>
</evidence>
<evidence type="ECO:0000250" key="3">
    <source>
        <dbReference type="UniProtKB" id="P09811"/>
    </source>
</evidence>
<evidence type="ECO:0000250" key="4">
    <source>
        <dbReference type="UniProtKB" id="Q9ET01"/>
    </source>
</evidence>
<evidence type="ECO:0000305" key="5"/>
<organism>
    <name type="scientific">Ovis aries</name>
    <name type="common">Sheep</name>
    <dbReference type="NCBI Taxonomy" id="9940"/>
    <lineage>
        <taxon>Eukaryota</taxon>
        <taxon>Metazoa</taxon>
        <taxon>Chordata</taxon>
        <taxon>Craniata</taxon>
        <taxon>Vertebrata</taxon>
        <taxon>Euteleostomi</taxon>
        <taxon>Mammalia</taxon>
        <taxon>Eutheria</taxon>
        <taxon>Laurasiatheria</taxon>
        <taxon>Artiodactyla</taxon>
        <taxon>Ruminantia</taxon>
        <taxon>Pecora</taxon>
        <taxon>Bovidae</taxon>
        <taxon>Caprinae</taxon>
        <taxon>Ovis</taxon>
    </lineage>
</organism>
<accession>Q5MIB5</accession>
<reference key="1">
    <citation type="submission" date="2004-11" db="EMBL/GenBank/DDBJ databases">
        <title>Characterization of ovine brain and liver glycogen phosphorylases.</title>
        <authorList>
            <person name="Walker K.R."/>
            <person name="Blechynden L.M."/>
            <person name="Binz N."/>
            <person name="Laing N.G."/>
        </authorList>
    </citation>
    <scope>NUCLEOTIDE SEQUENCE [MRNA]</scope>
    <source>
        <tissue>Liver</tissue>
    </source>
</reference>
<keyword id="KW-0007">Acetylation</keyword>
<keyword id="KW-0021">Allosteric enzyme</keyword>
<keyword id="KW-0119">Carbohydrate metabolism</keyword>
<keyword id="KW-0963">Cytoplasm</keyword>
<keyword id="KW-0321">Glycogen metabolism</keyword>
<keyword id="KW-0328">Glycosyltransferase</keyword>
<keyword id="KW-0547">Nucleotide-binding</keyword>
<keyword id="KW-0597">Phosphoprotein</keyword>
<keyword id="KW-0663">Pyridoxal phosphate</keyword>
<keyword id="KW-1185">Reference proteome</keyword>
<keyword id="KW-0808">Transferase</keyword>
<name>PYGL_SHEEP</name>